<name>LYS2_LUCSE</name>
<protein>
    <recommendedName>
        <fullName evidence="7">Lysozyme 2</fullName>
        <ecNumber evidence="3">3.2.1.17</ecNumber>
    </recommendedName>
    <alternativeName>
        <fullName evidence="3">1,4-beta-N-acetylmuramidase C</fullName>
    </alternativeName>
</protein>
<organism>
    <name type="scientific">Lucilia sericata</name>
    <name type="common">Green bottle fly</name>
    <name type="synonym">Phaenicia sericata</name>
    <dbReference type="NCBI Taxonomy" id="13632"/>
    <lineage>
        <taxon>Eukaryota</taxon>
        <taxon>Metazoa</taxon>
        <taxon>Ecdysozoa</taxon>
        <taxon>Arthropoda</taxon>
        <taxon>Hexapoda</taxon>
        <taxon>Insecta</taxon>
        <taxon>Pterygota</taxon>
        <taxon>Neoptera</taxon>
        <taxon>Endopterygota</taxon>
        <taxon>Diptera</taxon>
        <taxon>Brachycera</taxon>
        <taxon>Muscomorpha</taxon>
        <taxon>Oestroidea</taxon>
        <taxon>Calliphoridae</taxon>
        <taxon>Luciliinae</taxon>
        <taxon>Lucilia</taxon>
    </lineage>
</organism>
<accession>C0HLB7</accession>
<feature type="signal peptide" evidence="1">
    <location>
        <begin position="1"/>
        <end position="20"/>
    </location>
</feature>
<feature type="chain" id="PRO_0000445034" description="Lysozyme 2" evidence="1">
    <location>
        <begin position="21"/>
        <end position="142"/>
    </location>
</feature>
<feature type="domain" description="C-type lysozyme" evidence="3">
    <location>
        <begin position="21"/>
        <end position="142"/>
    </location>
</feature>
<feature type="active site" evidence="3">
    <location>
        <position position="52"/>
    </location>
</feature>
<feature type="active site" evidence="3">
    <location>
        <position position="70"/>
    </location>
</feature>
<feature type="glycosylation site" description="N-linked (GlcNAc...) asparagine" evidence="2">
    <location>
        <position position="66"/>
    </location>
</feature>
<feature type="disulfide bond" evidence="3">
    <location>
        <begin position="26"/>
        <end position="141"/>
    </location>
</feature>
<feature type="disulfide bond" evidence="3">
    <location>
        <begin position="47"/>
        <end position="131"/>
    </location>
</feature>
<feature type="disulfide bond" evidence="3">
    <location>
        <begin position="82"/>
        <end position="98"/>
    </location>
</feature>
<feature type="disulfide bond" evidence="3">
    <location>
        <begin position="94"/>
        <end position="112"/>
    </location>
</feature>
<comment type="function">
    <text evidence="5 9">Lysozymes have primarily a bacteriolytic function (Probable). Shows antibacterial activity against Gram-positive bacterium M.luteus but shows no activity against Gram-negative bacterium E.coli (PubMed:25098233). Likely to play a role in the eradication of ingested pathogens during their passage through the intestine (Probable).</text>
</comment>
<comment type="catalytic activity">
    <reaction evidence="3">
        <text>Hydrolysis of (1-&gt;4)-beta-linkages between N-acetylmuramic acid and N-acetyl-D-glucosamine residues in a peptidoglycan and between N-acetyl-D-glucosamine residues in chitodextrins.</text>
        <dbReference type="EC" id="3.2.1.17"/>
    </reaction>
</comment>
<comment type="subcellular location">
    <subcellularLocation>
        <location evidence="8">Secreted</location>
    </subcellularLocation>
</comment>
<comment type="tissue specificity">
    <text evidence="5">Expressed only in the midgut where it is concentrated around the middle in all larval stages.</text>
</comment>
<comment type="induction">
    <text evidence="4">By septic injury caused by dorsolateral puncturing with a needle contaminated with lipopolysaccharide (LPS) solution.</text>
</comment>
<comment type="similarity">
    <text evidence="3">Belongs to the glycosyl hydrolase 22 family.</text>
</comment>
<proteinExistence type="evidence at transcript level"/>
<sequence>MLKLTLTILAAVLLVTPAFGKVYTRCSLAREMHTLGVPKNQLARWTCIAEHESAYNTKAVGSMNSNGSRDYGIFQINNYYWCSPPSGAFSYNECKIKCADFLVDSIEPAVKCAQLVLRQQGWSAWSTWKYCDHTLPSIDDCF</sequence>
<dbReference type="EC" id="3.2.1.17" evidence="3"/>
<dbReference type="EMBL" id="FG360533">
    <property type="status" value="NOT_ANNOTATED_CDS"/>
    <property type="molecule type" value="mRNA"/>
</dbReference>
<dbReference type="SMR" id="C0HLB7"/>
<dbReference type="GO" id="GO:0005576">
    <property type="term" value="C:extracellular region"/>
    <property type="evidence" value="ECO:0007669"/>
    <property type="project" value="UniProtKB-SubCell"/>
</dbReference>
<dbReference type="GO" id="GO:0003796">
    <property type="term" value="F:lysozyme activity"/>
    <property type="evidence" value="ECO:0007669"/>
    <property type="project" value="UniProtKB-EC"/>
</dbReference>
<dbReference type="GO" id="GO:0042742">
    <property type="term" value="P:defense response to bacterium"/>
    <property type="evidence" value="ECO:0007669"/>
    <property type="project" value="UniProtKB-KW"/>
</dbReference>
<dbReference type="GO" id="GO:0031640">
    <property type="term" value="P:killing of cells of another organism"/>
    <property type="evidence" value="ECO:0007669"/>
    <property type="project" value="UniProtKB-KW"/>
</dbReference>
<dbReference type="CDD" id="cd16899">
    <property type="entry name" value="LYZ_C_invert"/>
    <property type="match status" value="1"/>
</dbReference>
<dbReference type="FunFam" id="1.10.530.10:FF:000001">
    <property type="entry name" value="Lysozyme C"/>
    <property type="match status" value="1"/>
</dbReference>
<dbReference type="Gene3D" id="1.10.530.10">
    <property type="match status" value="1"/>
</dbReference>
<dbReference type="InterPro" id="IPR001916">
    <property type="entry name" value="Glyco_hydro_22"/>
</dbReference>
<dbReference type="InterPro" id="IPR000974">
    <property type="entry name" value="Glyco_hydro_22_lys"/>
</dbReference>
<dbReference type="InterPro" id="IPR023346">
    <property type="entry name" value="Lysozyme-like_dom_sf"/>
</dbReference>
<dbReference type="PANTHER" id="PTHR11407:SF36">
    <property type="entry name" value="GEO02684P1-RELATED"/>
    <property type="match status" value="1"/>
</dbReference>
<dbReference type="PANTHER" id="PTHR11407">
    <property type="entry name" value="LYSOZYME C"/>
    <property type="match status" value="1"/>
</dbReference>
<dbReference type="Pfam" id="PF00062">
    <property type="entry name" value="Lys"/>
    <property type="match status" value="1"/>
</dbReference>
<dbReference type="PRINTS" id="PR00137">
    <property type="entry name" value="LYSOZYME"/>
</dbReference>
<dbReference type="PRINTS" id="PR00135">
    <property type="entry name" value="LYZLACT"/>
</dbReference>
<dbReference type="SMART" id="SM00263">
    <property type="entry name" value="LYZ1"/>
    <property type="match status" value="1"/>
</dbReference>
<dbReference type="SUPFAM" id="SSF53955">
    <property type="entry name" value="Lysozyme-like"/>
    <property type="match status" value="1"/>
</dbReference>
<dbReference type="PROSITE" id="PS51348">
    <property type="entry name" value="GLYCOSYL_HYDROL_F22_2"/>
    <property type="match status" value="1"/>
</dbReference>
<evidence type="ECO:0000255" key="1"/>
<evidence type="ECO:0000255" key="2">
    <source>
        <dbReference type="PROSITE-ProRule" id="PRU00498"/>
    </source>
</evidence>
<evidence type="ECO:0000255" key="3">
    <source>
        <dbReference type="PROSITE-ProRule" id="PRU00680"/>
    </source>
</evidence>
<evidence type="ECO:0000269" key="4">
    <source>
    </source>
</evidence>
<evidence type="ECO:0000269" key="5">
    <source>
    </source>
</evidence>
<evidence type="ECO:0000303" key="6">
    <source>
    </source>
</evidence>
<evidence type="ECO:0000303" key="7">
    <source>
    </source>
</evidence>
<evidence type="ECO:0000305" key="8"/>
<evidence type="ECO:0000305" key="9">
    <source>
    </source>
</evidence>
<reference evidence="8" key="1">
    <citation type="journal article" date="2009" name="Insect Mol. Biol.">
        <title>Septic injury-inducible genes in medicinal maggots of the green blow fly Lucilia sericata.</title>
        <authorList>
            <person name="Altincicek B."/>
            <person name="Vilcinskas A."/>
        </authorList>
    </citation>
    <scope>NUCLEOTIDE SEQUENCE [MRNA]</scope>
    <scope>INDUCTION</scope>
    <source>
        <tissue evidence="6">Larva</tissue>
    </source>
</reference>
<reference evidence="8" key="2">
    <citation type="journal article" date="2014" name="Insect Mol. Biol.">
        <title>Midgut lysozymes of Lucilia sericata - new antimicrobials involved in maggot debridement therapy.</title>
        <authorList>
            <person name="Valachova I."/>
            <person name="Takac P."/>
            <person name="Majtan J."/>
        </authorList>
    </citation>
    <scope>FUNCTION</scope>
    <scope>TISSUE SPECIFICITY</scope>
</reference>
<keyword id="KW-0929">Antimicrobial</keyword>
<keyword id="KW-0081">Bacteriolytic enzyme</keyword>
<keyword id="KW-1015">Disulfide bond</keyword>
<keyword id="KW-0325">Glycoprotein</keyword>
<keyword id="KW-0326">Glycosidase</keyword>
<keyword id="KW-0378">Hydrolase</keyword>
<keyword id="KW-0964">Secreted</keyword>
<keyword id="KW-0732">Signal</keyword>